<proteinExistence type="inferred from homology"/>
<evidence type="ECO:0000250" key="1"/>
<evidence type="ECO:0000255" key="2"/>
<evidence type="ECO:0000255" key="3">
    <source>
        <dbReference type="PROSITE-ProRule" id="PRU01230"/>
    </source>
</evidence>
<evidence type="ECO:0000305" key="4"/>
<accession>O14438</accession>
<comment type="function">
    <text>Guanine nucleotide-binding proteins (G proteins) are involved as modulators or transducers in various transmembrane signaling systems. This subunit is involved in cAMP regulation and morphogenesis. It is essential for dimorphic switching in haploid cells.</text>
</comment>
<comment type="subunit">
    <text>G proteins are composed of 3 units; alpha, beta and gamma. The alpha chain contains the guanine nucleotide binding site.</text>
</comment>
<comment type="similarity">
    <text evidence="4">Belongs to the G-alpha family.</text>
</comment>
<name>GPA3_USTHO</name>
<organism>
    <name type="scientific">Ustilago hordei</name>
    <name type="common">Barley covered smut fungus</name>
    <dbReference type="NCBI Taxonomy" id="120017"/>
    <lineage>
        <taxon>Eukaryota</taxon>
        <taxon>Fungi</taxon>
        <taxon>Dikarya</taxon>
        <taxon>Basidiomycota</taxon>
        <taxon>Ustilaginomycotina</taxon>
        <taxon>Ustilaginomycetes</taxon>
        <taxon>Ustilaginales</taxon>
        <taxon>Ustilaginaceae</taxon>
        <taxon>Ustilago</taxon>
    </lineage>
</organism>
<sequence>MGNCLSSSDQKEAKDRSVAIDKQIEQDSRQFKKECKILLLGSGESGKSTIVKQMKIIHQNGYSKDELLLYRLTVIKNLVDSAQAIVLALRKFKMEPEMPENRENVDVILQYRVDADPGATLDHPMARKVDSLWKDPIIPAIMERSSEFYLMDSAAYFFDNVNRIGQADYVPDENDVLRARSKTTGISETRFNMGQLSIHLFDVGGQRSERKKWIHCFEAVTSIIFCVALSEYDQVLLEESGQNRMAESLVLFESVVNSRWFLRTSVILFLNKIDIFKQKIPKQPLSKYFPEYSGGPDINKAAKYILWRFTQTNRARLSIYPHLTQATDTSNIRLVFAAVKETILTNALKDSGIL</sequence>
<dbReference type="EMBL" id="U76672">
    <property type="protein sequence ID" value="AAC49880.1"/>
    <property type="molecule type" value="Genomic_DNA"/>
</dbReference>
<dbReference type="SMR" id="O14438"/>
<dbReference type="OMA" id="ICKPDYM"/>
<dbReference type="OrthoDB" id="5817230at2759"/>
<dbReference type="GO" id="GO:0005737">
    <property type="term" value="C:cytoplasm"/>
    <property type="evidence" value="ECO:0007669"/>
    <property type="project" value="TreeGrafter"/>
</dbReference>
<dbReference type="GO" id="GO:0005834">
    <property type="term" value="C:heterotrimeric G-protein complex"/>
    <property type="evidence" value="ECO:0007669"/>
    <property type="project" value="InterPro"/>
</dbReference>
<dbReference type="GO" id="GO:0001664">
    <property type="term" value="F:G protein-coupled receptor binding"/>
    <property type="evidence" value="ECO:0007669"/>
    <property type="project" value="InterPro"/>
</dbReference>
<dbReference type="GO" id="GO:0031683">
    <property type="term" value="F:G-protein beta/gamma-subunit complex binding"/>
    <property type="evidence" value="ECO:0007669"/>
    <property type="project" value="InterPro"/>
</dbReference>
<dbReference type="GO" id="GO:0005525">
    <property type="term" value="F:GTP binding"/>
    <property type="evidence" value="ECO:0007669"/>
    <property type="project" value="UniProtKB-KW"/>
</dbReference>
<dbReference type="GO" id="GO:0003924">
    <property type="term" value="F:GTPase activity"/>
    <property type="evidence" value="ECO:0007669"/>
    <property type="project" value="InterPro"/>
</dbReference>
<dbReference type="GO" id="GO:0046872">
    <property type="term" value="F:metal ion binding"/>
    <property type="evidence" value="ECO:0007669"/>
    <property type="project" value="UniProtKB-KW"/>
</dbReference>
<dbReference type="GO" id="GO:0007189">
    <property type="term" value="P:adenylate cyclase-activating G protein-coupled receptor signaling pathway"/>
    <property type="evidence" value="ECO:0007669"/>
    <property type="project" value="TreeGrafter"/>
</dbReference>
<dbReference type="CDD" id="cd00066">
    <property type="entry name" value="G-alpha"/>
    <property type="match status" value="1"/>
</dbReference>
<dbReference type="FunFam" id="1.10.400.10:FF:000007">
    <property type="entry name" value="Guanine nucleotide-binding protein subunit alpha"/>
    <property type="match status" value="1"/>
</dbReference>
<dbReference type="FunFam" id="3.40.50.300:FF:000181">
    <property type="entry name" value="Guanine nucleotide-binding protein subunit alpha"/>
    <property type="match status" value="1"/>
</dbReference>
<dbReference type="FunFam" id="3.40.50.300:FF:000692">
    <property type="entry name" value="Guanine nucleotide-binding protein subunit alpha"/>
    <property type="match status" value="1"/>
</dbReference>
<dbReference type="Gene3D" id="1.10.400.10">
    <property type="entry name" value="GI Alpha 1, domain 2-like"/>
    <property type="match status" value="1"/>
</dbReference>
<dbReference type="Gene3D" id="3.40.50.300">
    <property type="entry name" value="P-loop containing nucleotide triphosphate hydrolases"/>
    <property type="match status" value="1"/>
</dbReference>
<dbReference type="InterPro" id="IPR002975">
    <property type="entry name" value="Fungi_Gprotein_alpha"/>
</dbReference>
<dbReference type="InterPro" id="IPR001019">
    <property type="entry name" value="Gprotein_alpha_su"/>
</dbReference>
<dbReference type="InterPro" id="IPR011025">
    <property type="entry name" value="GproteinA_insert"/>
</dbReference>
<dbReference type="InterPro" id="IPR027417">
    <property type="entry name" value="P-loop_NTPase"/>
</dbReference>
<dbReference type="PANTHER" id="PTHR10218">
    <property type="entry name" value="GTP-BINDING PROTEIN ALPHA SUBUNIT"/>
    <property type="match status" value="1"/>
</dbReference>
<dbReference type="PANTHER" id="PTHR10218:SF369">
    <property type="entry name" value="GUANINE NUCLEOTIDE-BINDING PROTEIN ALPHA-2 SUBUNIT"/>
    <property type="match status" value="1"/>
</dbReference>
<dbReference type="Pfam" id="PF00503">
    <property type="entry name" value="G-alpha"/>
    <property type="match status" value="1"/>
</dbReference>
<dbReference type="PRINTS" id="PR00318">
    <property type="entry name" value="GPROTEINA"/>
</dbReference>
<dbReference type="PRINTS" id="PR01241">
    <property type="entry name" value="GPROTEINAFNG"/>
</dbReference>
<dbReference type="SMART" id="SM00275">
    <property type="entry name" value="G_alpha"/>
    <property type="match status" value="1"/>
</dbReference>
<dbReference type="SUPFAM" id="SSF52540">
    <property type="entry name" value="P-loop containing nucleoside triphosphate hydrolases"/>
    <property type="match status" value="1"/>
</dbReference>
<dbReference type="SUPFAM" id="SSF47895">
    <property type="entry name" value="Transducin (alpha subunit), insertion domain"/>
    <property type="match status" value="1"/>
</dbReference>
<dbReference type="PROSITE" id="PS51882">
    <property type="entry name" value="G_ALPHA"/>
    <property type="match status" value="1"/>
</dbReference>
<gene>
    <name type="primary">FIL1</name>
</gene>
<keyword id="KW-0342">GTP-binding</keyword>
<keyword id="KW-0449">Lipoprotein</keyword>
<keyword id="KW-0460">Magnesium</keyword>
<keyword id="KW-0479">Metal-binding</keyword>
<keyword id="KW-0519">Myristate</keyword>
<keyword id="KW-0547">Nucleotide-binding</keyword>
<keyword id="KW-0564">Palmitate</keyword>
<keyword id="KW-0807">Transducer</keyword>
<feature type="initiator methionine" description="Removed" evidence="2">
    <location>
        <position position="1"/>
    </location>
</feature>
<feature type="chain" id="PRO_0000203611" description="Guanine nucleotide-binding protein alpha-3 subunit">
    <location>
        <begin position="2"/>
        <end position="354"/>
    </location>
</feature>
<feature type="domain" description="G-alpha" evidence="3">
    <location>
        <begin position="33"/>
        <end position="354"/>
    </location>
</feature>
<feature type="region of interest" description="G1 motif" evidence="3">
    <location>
        <begin position="36"/>
        <end position="49"/>
    </location>
</feature>
<feature type="region of interest" description="G2 motif" evidence="3">
    <location>
        <begin position="175"/>
        <end position="183"/>
    </location>
</feature>
<feature type="region of interest" description="G3 motif" evidence="3">
    <location>
        <begin position="198"/>
        <end position="207"/>
    </location>
</feature>
<feature type="region of interest" description="G4 motif" evidence="3">
    <location>
        <begin position="267"/>
        <end position="274"/>
    </location>
</feature>
<feature type="region of interest" description="G5 motif" evidence="3">
    <location>
        <begin position="324"/>
        <end position="329"/>
    </location>
</feature>
<feature type="binding site" evidence="1">
    <location>
        <begin position="41"/>
        <end position="48"/>
    </location>
    <ligand>
        <name>GTP</name>
        <dbReference type="ChEBI" id="CHEBI:37565"/>
    </ligand>
</feature>
<feature type="binding site" evidence="1">
    <location>
        <position position="48"/>
    </location>
    <ligand>
        <name>Mg(2+)</name>
        <dbReference type="ChEBI" id="CHEBI:18420"/>
    </ligand>
</feature>
<feature type="binding site" evidence="1">
    <location>
        <begin position="177"/>
        <end position="183"/>
    </location>
    <ligand>
        <name>GTP</name>
        <dbReference type="ChEBI" id="CHEBI:37565"/>
    </ligand>
</feature>
<feature type="binding site" evidence="1">
    <location>
        <position position="183"/>
    </location>
    <ligand>
        <name>Mg(2+)</name>
        <dbReference type="ChEBI" id="CHEBI:18420"/>
    </ligand>
</feature>
<feature type="binding site" evidence="1">
    <location>
        <begin position="202"/>
        <end position="206"/>
    </location>
    <ligand>
        <name>GTP</name>
        <dbReference type="ChEBI" id="CHEBI:37565"/>
    </ligand>
</feature>
<feature type="binding site" evidence="1">
    <location>
        <begin position="271"/>
        <end position="274"/>
    </location>
    <ligand>
        <name>GTP</name>
        <dbReference type="ChEBI" id="CHEBI:37565"/>
    </ligand>
</feature>
<feature type="binding site" evidence="1">
    <location>
        <position position="326"/>
    </location>
    <ligand>
        <name>GTP</name>
        <dbReference type="ChEBI" id="CHEBI:37565"/>
    </ligand>
</feature>
<feature type="lipid moiety-binding region" description="N-myristoyl glycine" evidence="2">
    <location>
        <position position="2"/>
    </location>
</feature>
<feature type="lipid moiety-binding region" description="S-palmitoyl cysteine" evidence="2">
    <location>
        <position position="4"/>
    </location>
</feature>
<reference key="1">
    <citation type="journal article" date="1997" name="Mol. Gen. Genet.">
        <title>Fil1, a G-protein alpha-subunit that acts upstream of cAMP and is essential for dimorphic switching in haploid cells of Ustilago hordei.</title>
        <authorList>
            <person name="Lichter A."/>
            <person name="Mills D."/>
        </authorList>
    </citation>
    <scope>NUCLEOTIDE SEQUENCE [GENOMIC DNA]</scope>
    <source>
        <strain>UH100</strain>
    </source>
</reference>
<protein>
    <recommendedName>
        <fullName>Guanine nucleotide-binding protein alpha-3 subunit</fullName>
    </recommendedName>
</protein>